<feature type="chain" id="PRO_0000066648" description="Glutathione peroxidase homolog BsaA">
    <location>
        <begin position="1"/>
        <end position="157"/>
    </location>
</feature>
<feature type="active site" evidence="1">
    <location>
        <position position="35"/>
    </location>
</feature>
<reference key="1">
    <citation type="journal article" date="1999" name="Extremophiles">
        <title>An improved physical and genetic map of the genome of alkaliphilic Bacillus sp. C-125.</title>
        <authorList>
            <person name="Takami H."/>
            <person name="Nakasone K."/>
            <person name="Hirama C."/>
            <person name="Takaki Y."/>
            <person name="Masui N."/>
            <person name="Fuji F."/>
            <person name="Nakamura Y."/>
            <person name="Inoue A."/>
        </authorList>
    </citation>
    <scope>NUCLEOTIDE SEQUENCE [GENOMIC DNA]</scope>
    <source>
        <strain>ATCC BAA-125 / DSM 18197 / FERM 7344 / JCM 9153 / C-125</strain>
    </source>
</reference>
<reference key="2">
    <citation type="journal article" date="2000" name="Nucleic Acids Res.">
        <title>Complete genome sequence of the alkaliphilic bacterium Bacillus halodurans and genomic sequence comparison with Bacillus subtilis.</title>
        <authorList>
            <person name="Takami H."/>
            <person name="Nakasone K."/>
            <person name="Takaki Y."/>
            <person name="Maeno G."/>
            <person name="Sasaki R."/>
            <person name="Masui N."/>
            <person name="Fuji F."/>
            <person name="Hirama C."/>
            <person name="Nakamura Y."/>
            <person name="Ogasawara N."/>
            <person name="Kuhara S."/>
            <person name="Horikoshi K."/>
        </authorList>
    </citation>
    <scope>NUCLEOTIDE SEQUENCE [LARGE SCALE GENOMIC DNA]</scope>
    <source>
        <strain>ATCC BAA-125 / DSM 18197 / FERM 7344 / JCM 9153 / C-125</strain>
    </source>
</reference>
<name>BSAA_HALH5</name>
<organism>
    <name type="scientific">Halalkalibacterium halodurans (strain ATCC BAA-125 / DSM 18197 / FERM 7344 / JCM 9153 / C-125)</name>
    <name type="common">Bacillus halodurans</name>
    <dbReference type="NCBI Taxonomy" id="272558"/>
    <lineage>
        <taxon>Bacteria</taxon>
        <taxon>Bacillati</taxon>
        <taxon>Bacillota</taxon>
        <taxon>Bacilli</taxon>
        <taxon>Bacillales</taxon>
        <taxon>Bacillaceae</taxon>
        <taxon>Halalkalibacterium (ex Joshi et al. 2022)</taxon>
    </lineage>
</organism>
<sequence>MSIHEFSARLINGEEKALSDYKDQVLLIVNTASKCGLTPQYEELQILYETYKDQGFTVLGFPSNQFMNQEPGDHNEIAAFCERNYGVSFPIFEKVKVNGKEAHPLFQYLTSQQGGLFTEKIKWNFTKFLIDRSGNVVKRYAPSTSPIKIKDDIEELL</sequence>
<evidence type="ECO:0000250" key="1"/>
<evidence type="ECO:0000305" key="2"/>
<keyword id="KW-0560">Oxidoreductase</keyword>
<keyword id="KW-0575">Peroxidase</keyword>
<keyword id="KW-1185">Reference proteome</keyword>
<dbReference type="EC" id="1.-.-.-"/>
<dbReference type="EMBL" id="AB013377">
    <property type="protein sequence ID" value="BAA75395.1"/>
    <property type="molecule type" value="Genomic_DNA"/>
</dbReference>
<dbReference type="EMBL" id="BA000004">
    <property type="protein sequence ID" value="BAB06549.1"/>
    <property type="molecule type" value="Genomic_DNA"/>
</dbReference>
<dbReference type="PIR" id="F84003">
    <property type="entry name" value="F84003"/>
</dbReference>
<dbReference type="RefSeq" id="WP_010898978.1">
    <property type="nucleotide sequence ID" value="NC_002570.2"/>
</dbReference>
<dbReference type="SMR" id="Q9Z9N7"/>
<dbReference type="STRING" id="272558.gene:10728739"/>
<dbReference type="PeroxiBase" id="3983">
    <property type="entry name" value="BhaGPx01"/>
</dbReference>
<dbReference type="GeneID" id="87598358"/>
<dbReference type="KEGG" id="bha:BH2830"/>
<dbReference type="eggNOG" id="COG0386">
    <property type="taxonomic scope" value="Bacteria"/>
</dbReference>
<dbReference type="HOGENOM" id="CLU_029507_4_0_9"/>
<dbReference type="OrthoDB" id="9789406at2"/>
<dbReference type="Proteomes" id="UP000001258">
    <property type="component" value="Chromosome"/>
</dbReference>
<dbReference type="GO" id="GO:0004601">
    <property type="term" value="F:peroxidase activity"/>
    <property type="evidence" value="ECO:0007669"/>
    <property type="project" value="UniProtKB-KW"/>
</dbReference>
<dbReference type="GO" id="GO:0034599">
    <property type="term" value="P:cellular response to oxidative stress"/>
    <property type="evidence" value="ECO:0007669"/>
    <property type="project" value="TreeGrafter"/>
</dbReference>
<dbReference type="CDD" id="cd00340">
    <property type="entry name" value="GSH_Peroxidase"/>
    <property type="match status" value="1"/>
</dbReference>
<dbReference type="FunFam" id="3.40.30.10:FF:000010">
    <property type="entry name" value="Glutathione peroxidase"/>
    <property type="match status" value="1"/>
</dbReference>
<dbReference type="Gene3D" id="3.40.30.10">
    <property type="entry name" value="Glutaredoxin"/>
    <property type="match status" value="1"/>
</dbReference>
<dbReference type="InterPro" id="IPR000889">
    <property type="entry name" value="Glutathione_peroxidase"/>
</dbReference>
<dbReference type="InterPro" id="IPR029759">
    <property type="entry name" value="GPX_AS"/>
</dbReference>
<dbReference type="InterPro" id="IPR029760">
    <property type="entry name" value="GPX_CS"/>
</dbReference>
<dbReference type="InterPro" id="IPR036249">
    <property type="entry name" value="Thioredoxin-like_sf"/>
</dbReference>
<dbReference type="PANTHER" id="PTHR11592">
    <property type="entry name" value="GLUTATHIONE PEROXIDASE"/>
    <property type="match status" value="1"/>
</dbReference>
<dbReference type="PANTHER" id="PTHR11592:SF78">
    <property type="entry name" value="GLUTATHIONE PEROXIDASE"/>
    <property type="match status" value="1"/>
</dbReference>
<dbReference type="Pfam" id="PF00255">
    <property type="entry name" value="GSHPx"/>
    <property type="match status" value="1"/>
</dbReference>
<dbReference type="PIRSF" id="PIRSF000303">
    <property type="entry name" value="Glutathion_perox"/>
    <property type="match status" value="1"/>
</dbReference>
<dbReference type="PRINTS" id="PR01011">
    <property type="entry name" value="GLUTPROXDASE"/>
</dbReference>
<dbReference type="SUPFAM" id="SSF52833">
    <property type="entry name" value="Thioredoxin-like"/>
    <property type="match status" value="1"/>
</dbReference>
<dbReference type="PROSITE" id="PS00460">
    <property type="entry name" value="GLUTATHIONE_PEROXID_1"/>
    <property type="match status" value="1"/>
</dbReference>
<dbReference type="PROSITE" id="PS00763">
    <property type="entry name" value="GLUTATHIONE_PEROXID_2"/>
    <property type="match status" value="1"/>
</dbReference>
<dbReference type="PROSITE" id="PS51355">
    <property type="entry name" value="GLUTATHIONE_PEROXID_3"/>
    <property type="match status" value="1"/>
</dbReference>
<proteinExistence type="inferred from homology"/>
<comment type="similarity">
    <text evidence="2">Belongs to the glutathione peroxidase family.</text>
</comment>
<accession>Q9Z9N7</accession>
<protein>
    <recommendedName>
        <fullName>Glutathione peroxidase homolog BsaA</fullName>
        <ecNumber>1.-.-.-</ecNumber>
    </recommendedName>
</protein>
<gene>
    <name type="primary">bsaA</name>
    <name type="ordered locus">BH2830</name>
</gene>